<comment type="function">
    <text evidence="1">Specifically methylates the guanine in position 2445 (m2G2445) and the guanine in position 2069 (m7G2069) of 23S rRNA.</text>
</comment>
<comment type="catalytic activity">
    <reaction evidence="1">
        <text>guanosine(2445) in 23S rRNA + S-adenosyl-L-methionine = N(2)-methylguanosine(2445) in 23S rRNA + S-adenosyl-L-homocysteine + H(+)</text>
        <dbReference type="Rhea" id="RHEA:42740"/>
        <dbReference type="Rhea" id="RHEA-COMP:10215"/>
        <dbReference type="Rhea" id="RHEA-COMP:10216"/>
        <dbReference type="ChEBI" id="CHEBI:15378"/>
        <dbReference type="ChEBI" id="CHEBI:57856"/>
        <dbReference type="ChEBI" id="CHEBI:59789"/>
        <dbReference type="ChEBI" id="CHEBI:74269"/>
        <dbReference type="ChEBI" id="CHEBI:74481"/>
        <dbReference type="EC" id="2.1.1.173"/>
    </reaction>
</comment>
<comment type="catalytic activity">
    <reaction evidence="1">
        <text>guanosine(2069) in 23S rRNA + S-adenosyl-L-methionine = N(2)-methylguanosine(2069) in 23S rRNA + S-adenosyl-L-homocysteine + H(+)</text>
        <dbReference type="Rhea" id="RHEA:43772"/>
        <dbReference type="Rhea" id="RHEA-COMP:10688"/>
        <dbReference type="Rhea" id="RHEA-COMP:10689"/>
        <dbReference type="ChEBI" id="CHEBI:15378"/>
        <dbReference type="ChEBI" id="CHEBI:57856"/>
        <dbReference type="ChEBI" id="CHEBI:59789"/>
        <dbReference type="ChEBI" id="CHEBI:74269"/>
        <dbReference type="ChEBI" id="CHEBI:74481"/>
        <dbReference type="EC" id="2.1.1.264"/>
    </reaction>
</comment>
<comment type="subcellular location">
    <subcellularLocation>
        <location evidence="1">Cytoplasm</location>
    </subcellularLocation>
</comment>
<comment type="similarity">
    <text evidence="1">Belongs to the methyltransferase superfamily. RlmKL family.</text>
</comment>
<comment type="sequence caution" evidence="2">
    <conflict type="erroneous initiation">
        <sequence resource="EMBL-CDS" id="ACB93523"/>
    </conflict>
    <text>Extended N-terminus.</text>
</comment>
<feature type="chain" id="PRO_0000366863" description="Ribosomal RNA large subunit methyltransferase K/L">
    <location>
        <begin position="1"/>
        <end position="724"/>
    </location>
</feature>
<feature type="domain" description="THUMP" evidence="1">
    <location>
        <begin position="42"/>
        <end position="153"/>
    </location>
</feature>
<gene>
    <name evidence="1" type="primary">rlmL</name>
    <name type="ordered locus">XfasM23_2125</name>
</gene>
<dbReference type="EC" id="2.1.1.173" evidence="1"/>
<dbReference type="EC" id="2.1.1.264" evidence="1"/>
<dbReference type="EMBL" id="CP001011">
    <property type="protein sequence ID" value="ACB93523.1"/>
    <property type="status" value="ALT_INIT"/>
    <property type="molecule type" value="Genomic_DNA"/>
</dbReference>
<dbReference type="SMR" id="B2IA87"/>
<dbReference type="KEGG" id="xfn:XfasM23_2125"/>
<dbReference type="HOGENOM" id="CLU_014042_2_0_6"/>
<dbReference type="Proteomes" id="UP000001698">
    <property type="component" value="Chromosome"/>
</dbReference>
<dbReference type="GO" id="GO:0005737">
    <property type="term" value="C:cytoplasm"/>
    <property type="evidence" value="ECO:0007669"/>
    <property type="project" value="UniProtKB-SubCell"/>
</dbReference>
<dbReference type="GO" id="GO:0052915">
    <property type="term" value="F:23S rRNA (guanine(2445)-N(2))-methyltransferase activity"/>
    <property type="evidence" value="ECO:0007669"/>
    <property type="project" value="UniProtKB-UniRule"/>
</dbReference>
<dbReference type="GO" id="GO:0003723">
    <property type="term" value="F:RNA binding"/>
    <property type="evidence" value="ECO:0007669"/>
    <property type="project" value="UniProtKB-KW"/>
</dbReference>
<dbReference type="GO" id="GO:0070043">
    <property type="term" value="F:rRNA (guanine-N7-)-methyltransferase activity"/>
    <property type="evidence" value="ECO:0007669"/>
    <property type="project" value="UniProtKB-UniRule"/>
</dbReference>
<dbReference type="CDD" id="cd02440">
    <property type="entry name" value="AdoMet_MTases"/>
    <property type="match status" value="1"/>
</dbReference>
<dbReference type="CDD" id="cd11715">
    <property type="entry name" value="THUMP_AdoMetMT"/>
    <property type="match status" value="1"/>
</dbReference>
<dbReference type="FunFam" id="3.30.750.80:FF:000003">
    <property type="entry name" value="Ribosomal RNA large subunit methyltransferase K/L"/>
    <property type="match status" value="1"/>
</dbReference>
<dbReference type="Gene3D" id="3.30.2130.30">
    <property type="match status" value="1"/>
</dbReference>
<dbReference type="Gene3D" id="3.30.750.80">
    <property type="entry name" value="RNA methyltransferase domain (HRMD) like"/>
    <property type="match status" value="1"/>
</dbReference>
<dbReference type="Gene3D" id="3.40.50.150">
    <property type="entry name" value="Vaccinia Virus protein VP39"/>
    <property type="match status" value="2"/>
</dbReference>
<dbReference type="HAMAP" id="MF_01858">
    <property type="entry name" value="23SrRNA_methyltr_KL"/>
    <property type="match status" value="1"/>
</dbReference>
<dbReference type="InterPro" id="IPR017244">
    <property type="entry name" value="23SrRNA_methyltr_KL"/>
</dbReference>
<dbReference type="InterPro" id="IPR000241">
    <property type="entry name" value="RlmKL-like_Mtase"/>
</dbReference>
<dbReference type="InterPro" id="IPR053943">
    <property type="entry name" value="RlmKL-like_Mtase_CS"/>
</dbReference>
<dbReference type="InterPro" id="IPR054170">
    <property type="entry name" value="RlmL_1st"/>
</dbReference>
<dbReference type="InterPro" id="IPR019614">
    <property type="entry name" value="SAM-dep_methyl-trfase"/>
</dbReference>
<dbReference type="InterPro" id="IPR029063">
    <property type="entry name" value="SAM-dependent_MTases_sf"/>
</dbReference>
<dbReference type="InterPro" id="IPR004114">
    <property type="entry name" value="THUMP_dom"/>
</dbReference>
<dbReference type="NCBIfam" id="NF008748">
    <property type="entry name" value="PRK11783.1"/>
    <property type="match status" value="1"/>
</dbReference>
<dbReference type="PANTHER" id="PTHR47313">
    <property type="entry name" value="RIBOSOMAL RNA LARGE SUBUNIT METHYLTRANSFERASE K/L"/>
    <property type="match status" value="1"/>
</dbReference>
<dbReference type="PANTHER" id="PTHR47313:SF1">
    <property type="entry name" value="RIBOSOMAL RNA LARGE SUBUNIT METHYLTRANSFERASE K_L"/>
    <property type="match status" value="1"/>
</dbReference>
<dbReference type="Pfam" id="PF10672">
    <property type="entry name" value="Methyltrans_SAM"/>
    <property type="match status" value="1"/>
</dbReference>
<dbReference type="Pfam" id="PF22020">
    <property type="entry name" value="RlmL_1st"/>
    <property type="match status" value="1"/>
</dbReference>
<dbReference type="Pfam" id="PF02926">
    <property type="entry name" value="THUMP"/>
    <property type="match status" value="1"/>
</dbReference>
<dbReference type="Pfam" id="PF01170">
    <property type="entry name" value="UPF0020"/>
    <property type="match status" value="1"/>
</dbReference>
<dbReference type="PIRSF" id="PIRSF037618">
    <property type="entry name" value="RNA_Mtase_bacteria_prd"/>
    <property type="match status" value="1"/>
</dbReference>
<dbReference type="SMART" id="SM00981">
    <property type="entry name" value="THUMP"/>
    <property type="match status" value="1"/>
</dbReference>
<dbReference type="SUPFAM" id="SSF53335">
    <property type="entry name" value="S-adenosyl-L-methionine-dependent methyltransferases"/>
    <property type="match status" value="2"/>
</dbReference>
<dbReference type="PROSITE" id="PS51165">
    <property type="entry name" value="THUMP"/>
    <property type="match status" value="1"/>
</dbReference>
<dbReference type="PROSITE" id="PS01261">
    <property type="entry name" value="UPF0020"/>
    <property type="match status" value="1"/>
</dbReference>
<proteinExistence type="inferred from homology"/>
<protein>
    <recommendedName>
        <fullName evidence="1">Ribosomal RNA large subunit methyltransferase K/L</fullName>
    </recommendedName>
    <domain>
        <recommendedName>
            <fullName evidence="1">23S rRNA m2G2445 methyltransferase</fullName>
            <ecNumber evidence="1">2.1.1.173</ecNumber>
        </recommendedName>
        <alternativeName>
            <fullName evidence="1">rRNA (guanine-N(2)-)-methyltransferase RlmL</fullName>
        </alternativeName>
    </domain>
    <domain>
        <recommendedName>
            <fullName evidence="1">23S rRNA m7G2069 methyltransferase</fullName>
            <ecNumber evidence="1">2.1.1.264</ecNumber>
        </recommendedName>
        <alternativeName>
            <fullName evidence="1">rRNA (guanine-N(7)-)-methyltransferase RlmK</fullName>
        </alternativeName>
    </domain>
</protein>
<keyword id="KW-0963">Cytoplasm</keyword>
<keyword id="KW-0489">Methyltransferase</keyword>
<keyword id="KW-0694">RNA-binding</keyword>
<keyword id="KW-0698">rRNA processing</keyword>
<keyword id="KW-0949">S-adenosyl-L-methionine</keyword>
<keyword id="KW-0808">Transferase</keyword>
<accession>B2IA87</accession>
<evidence type="ECO:0000255" key="1">
    <source>
        <dbReference type="HAMAP-Rule" id="MF_01858"/>
    </source>
</evidence>
<evidence type="ECO:0000305" key="2"/>
<sequence>MRFFVSCAKGLEYLLVDEVLALGAAGATATVAGVNVEGGLCDAQRLVLWSRLASRVLWPLAAFACADEDALYAGVAALPWVEHVLPGQTLAVDAHVSGEAITHARYAAQRVKDAVVDTLRDAGVVRPSVDVEHPDVRLNLSLRKGRATLSVDLGGRALHHRGWRQAPHAASLKEHLAAAVLLRAGWAKVYAEGGGLLDPMCGSGTLLIEGALMVADVAPGLSRYADPDAMSHVSVAERPVLLPSRWRGFDVVAWEALVVDAQQRARRGLAELRPVLHGSDIDPRALGAAFANARAAGVQDAIEFVVAGIDVLPAVSEPHGVVVCNAPYDVRLAADPGLYRHLGDALRRVVPRWRAALVCGSSTLAFATGLRADKKYQFFNGALECVLIVCDPVVPLAREAGGAQALSEGAQMAANRLRKNVQRLKKWRIRAGVECYRVYDADLPEYAAAIDVYQEVDGARRLFLHVQEYAAPASIPEGDVRRRRHELLAAVRAVFDVSVAQVALKTRQRGKGGSQYGCFAQRGEFFHVCEHGALLRVNLFDYLDTGLFLDHRPLRGRMAREAVGKRFLNVFCYTGVASVEAAVAGAAATTSVDLSSTYLHWCTDNFALNGQGGVRHRLVQADALAWLEAERGQYDVIFCDPPTFSNSARADDFDVQRDHVRLLRAAVARLTPGGVLYFSNNFRRFRLDVDAVAAFAQCEEISPVTIDLDFSRNTRIHRTWLLWR</sequence>
<reference key="1">
    <citation type="journal article" date="2010" name="J. Bacteriol.">
        <title>Whole genome sequences of two Xylella fastidiosa strains (M12 and M23) causing almond leaf scorch disease in California.</title>
        <authorList>
            <person name="Chen J."/>
            <person name="Xie G."/>
            <person name="Han S."/>
            <person name="Chertkov O."/>
            <person name="Sims D."/>
            <person name="Civerolo E.L."/>
        </authorList>
    </citation>
    <scope>NUCLEOTIDE SEQUENCE [LARGE SCALE GENOMIC DNA]</scope>
    <source>
        <strain>M23</strain>
    </source>
</reference>
<organism>
    <name type="scientific">Xylella fastidiosa (strain M23)</name>
    <dbReference type="NCBI Taxonomy" id="405441"/>
    <lineage>
        <taxon>Bacteria</taxon>
        <taxon>Pseudomonadati</taxon>
        <taxon>Pseudomonadota</taxon>
        <taxon>Gammaproteobacteria</taxon>
        <taxon>Lysobacterales</taxon>
        <taxon>Lysobacteraceae</taxon>
        <taxon>Xylella</taxon>
    </lineage>
</organism>
<name>RLMKL_XYLF2</name>